<reference key="1">
    <citation type="journal article" date="2008" name="BMC Genomics">
        <title>Acidithiobacillus ferrooxidans metabolism: from genome sequence to industrial applications.</title>
        <authorList>
            <person name="Valdes J."/>
            <person name="Pedroso I."/>
            <person name="Quatrini R."/>
            <person name="Dodson R.J."/>
            <person name="Tettelin H."/>
            <person name="Blake R. II"/>
            <person name="Eisen J.A."/>
            <person name="Holmes D.S."/>
        </authorList>
    </citation>
    <scope>NUCLEOTIDE SEQUENCE [LARGE SCALE GENOMIC DNA]</scope>
    <source>
        <strain>ATCC 23270 / DSM 14882 / CIP 104768 / NCIMB 8455</strain>
    </source>
</reference>
<proteinExistence type="inferred from homology"/>
<comment type="function">
    <text evidence="1">Part of an energy-coupled inorganic carbon pump.</text>
</comment>
<comment type="cofactor">
    <cofactor evidence="1">
        <name>Zn(2+)</name>
        <dbReference type="ChEBI" id="CHEBI:29105"/>
    </cofactor>
</comment>
<comment type="subunit">
    <text evidence="1">Forms a complex with DabB.</text>
</comment>
<comment type="subcellular location">
    <subcellularLocation>
        <location evidence="1">Cell inner membrane</location>
        <topology evidence="1">Peripheral membrane protein</topology>
    </subcellularLocation>
</comment>
<comment type="similarity">
    <text evidence="1">Belongs to the inorganic carbon transporter (TC 9.A.2) DabA family.</text>
</comment>
<dbReference type="EMBL" id="CP001219">
    <property type="protein sequence ID" value="ACK79429.1"/>
    <property type="molecule type" value="Genomic_DNA"/>
</dbReference>
<dbReference type="RefSeq" id="WP_012607161.1">
    <property type="nucleotide sequence ID" value="NC_011761.1"/>
</dbReference>
<dbReference type="STRING" id="243159.AFE_1661"/>
<dbReference type="PaxDb" id="243159-AFE_1661"/>
<dbReference type="GeneID" id="65280851"/>
<dbReference type="KEGG" id="afr:AFE_1661"/>
<dbReference type="eggNOG" id="COG3002">
    <property type="taxonomic scope" value="Bacteria"/>
</dbReference>
<dbReference type="HOGENOM" id="CLU_009885_1_0_6"/>
<dbReference type="Proteomes" id="UP000001362">
    <property type="component" value="Chromosome"/>
</dbReference>
<dbReference type="GO" id="GO:0005886">
    <property type="term" value="C:plasma membrane"/>
    <property type="evidence" value="ECO:0007669"/>
    <property type="project" value="UniProtKB-SubCell"/>
</dbReference>
<dbReference type="GO" id="GO:0008270">
    <property type="term" value="F:zinc ion binding"/>
    <property type="evidence" value="ECO:0007669"/>
    <property type="project" value="UniProtKB-UniRule"/>
</dbReference>
<dbReference type="HAMAP" id="MF_01871">
    <property type="entry name" value="DabA"/>
    <property type="match status" value="1"/>
</dbReference>
<dbReference type="InterPro" id="IPR018752">
    <property type="entry name" value="DabA"/>
</dbReference>
<dbReference type="PANTHER" id="PTHR38344:SF1">
    <property type="entry name" value="INORGANIC CARBON TRANSPORTER SUBUNIT DABA-RELATED"/>
    <property type="match status" value="1"/>
</dbReference>
<dbReference type="PANTHER" id="PTHR38344">
    <property type="entry name" value="UPF0753 PROTEIN AQ_863"/>
    <property type="match status" value="1"/>
</dbReference>
<dbReference type="Pfam" id="PF10070">
    <property type="entry name" value="DabA"/>
    <property type="match status" value="1"/>
</dbReference>
<evidence type="ECO:0000255" key="1">
    <source>
        <dbReference type="HAMAP-Rule" id="MF_01871"/>
    </source>
</evidence>
<sequence>MPTPATIKSYQDIKANIEGACQRIAPLWPLKHFVAVNPYVGLRDQPFWRADQTLRKITGKGLTMPRPYYEEQIANGRIIQEDLDEALKQMHSNWSVTQLKQVMKQRSASRNVPFPVFADAMFADDRRDWPGFVVERISQYCAAYFDEGQATWSMPWRDDPMYQAWLKFMHFDKSPRMVGLRGIGEAAAALPAAAETAIALALKELSVPFDLIDDYLFAALLSIGGWAGWARYLRWQAELKGETDQSLRDLLAIRVCWDAILHKTCADIAVRKQWHLMLHTQQNRAIEKPSEHVDAILQTALEIGYQRSLIKSLKEASRPSNTVIERPVAQAAFCIDVRSEIIRRALETVAPGIQTLGFAGFFGVLMEYVPFGSNAPKGHLPVIFNPPYRVCEDLSHASEDETQRHAAKRQLRLRVATAWKSFKTSAVSTFTFVEATGLLYAPKLFGDSMGWTRTVPHPDERGLDSGTKQRLRPRLIASGNGKSSAKSTGIPETERAGVGEFILKNMGLTQTFARLILLAGHGSTTVNNPQGTGLDCGACAGQTGEASARIAVTLLNDPATRRGLEEKGLKIPKDTYFIAGLHDTTTDEVTIFDTEDLPTTHAKDLAQLRQWLADAGELTRLERATLLGTASQAPEVVTRDMRRRTRDWAEVRPEWALAGNAAFIAAPRQRTRGVDLEGRAFLHDYDWHKDAGFSTLELIMTAPMVVANWINMQYYGSMVDNLRFGSGNKVLHNVVGGSIGVLEGNGGDLRVGFALQSLHDGKRWIHEPVRLNVVIEAPQAEMESIISRHILVRELVDNGWLYLFQIDDDGSVYRRVCDKQWPRMT</sequence>
<keyword id="KW-0997">Cell inner membrane</keyword>
<keyword id="KW-1003">Cell membrane</keyword>
<keyword id="KW-0472">Membrane</keyword>
<keyword id="KW-0479">Metal-binding</keyword>
<keyword id="KW-1185">Reference proteome</keyword>
<keyword id="KW-0813">Transport</keyword>
<keyword id="KW-0862">Zinc</keyword>
<accession>B7JB00</accession>
<name>DABA_ACIF2</name>
<feature type="chain" id="PRO_0000387227" description="Probable inorganic carbon transporter subunit DabA">
    <location>
        <begin position="1"/>
        <end position="825"/>
    </location>
</feature>
<feature type="binding site" evidence="1">
    <location>
        <position position="334"/>
    </location>
    <ligand>
        <name>Zn(2+)</name>
        <dbReference type="ChEBI" id="CHEBI:29105"/>
    </ligand>
</feature>
<feature type="binding site" evidence="1">
    <location>
        <position position="336"/>
    </location>
    <ligand>
        <name>Zn(2+)</name>
        <dbReference type="ChEBI" id="CHEBI:29105"/>
    </ligand>
</feature>
<feature type="binding site" evidence="1">
    <location>
        <position position="521"/>
    </location>
    <ligand>
        <name>Zn(2+)</name>
        <dbReference type="ChEBI" id="CHEBI:29105"/>
    </ligand>
</feature>
<feature type="binding site" evidence="1">
    <location>
        <position position="536"/>
    </location>
    <ligand>
        <name>Zn(2+)</name>
        <dbReference type="ChEBI" id="CHEBI:29105"/>
    </ligand>
</feature>
<organism>
    <name type="scientific">Acidithiobacillus ferrooxidans (strain ATCC 23270 / DSM 14882 / CIP 104768 / NCIMB 8455)</name>
    <name type="common">Ferrobacillus ferrooxidans (strain ATCC 23270)</name>
    <dbReference type="NCBI Taxonomy" id="243159"/>
    <lineage>
        <taxon>Bacteria</taxon>
        <taxon>Pseudomonadati</taxon>
        <taxon>Pseudomonadota</taxon>
        <taxon>Acidithiobacillia</taxon>
        <taxon>Acidithiobacillales</taxon>
        <taxon>Acidithiobacillaceae</taxon>
        <taxon>Acidithiobacillus</taxon>
    </lineage>
</organism>
<gene>
    <name evidence="1" type="primary">dabA</name>
    <name type="ordered locus">AFE_1661</name>
</gene>
<protein>
    <recommendedName>
        <fullName evidence="1">Probable inorganic carbon transporter subunit DabA</fullName>
    </recommendedName>
</protein>